<proteinExistence type="evidence at protein level"/>
<comment type="function">
    <text evidence="11 12">The muscarinic acetylcholine receptor mediates various cellular responses, including inhibition of adenylate cyclase, breakdown of phosphoinositides and modulation of potassium channels through the action of G proteins. Primary transducing effect is adenylate cyclase inhibition. Signaling promotes phospholipase C activity, leading to the release of inositol trisphosphate (IP3); this then triggers calcium ion release into the cytosol.</text>
</comment>
<comment type="subunit">
    <text evidence="9 10 13">Interacts with ARRB1 and ARRB2. Interacts with RACK1; the interaction regulates CHRM2 internalization.</text>
</comment>
<comment type="subcellular location">
    <subcellularLocation>
        <location evidence="10 11 12">Cell membrane</location>
        <topology evidence="10 11">Multi-pass membrane protein</topology>
    </subcellularLocation>
    <subcellularLocation>
        <location evidence="14">Postsynaptic cell membrane</location>
        <topology evidence="14">Multi-pass membrane protein</topology>
    </subcellularLocation>
    <text evidence="2">Phosphorylation in response to agonist binding promotes receptor internalization.</text>
</comment>
<comment type="induction">
    <text evidence="8">Up-regulated in response to enterovirus 71 (EV71) infection.</text>
</comment>
<comment type="PTM">
    <text evidence="1">Phosphorylated in response to agonist treatment.</text>
</comment>
<comment type="polymorphism">
    <text evidence="15">Genetic variations in CHRM2 can influence susceptibility to alcoholism [MIM:103780].</text>
</comment>
<comment type="disease" evidence="7">
    <disease id="DI-00697">
        <name>Major depressive disorder</name>
        <acronym>MDD</acronym>
        <description>A common psychiatric disorder. It is a complex trait characterized by one or more major depressive episodes without a history of manic, mixed, or hypomanic episodes. A major depressive episode is characterized by at least 2 weeks during which there is a new onset or clear worsening of either depressed mood or loss of interest or pleasure in nearly all activities. Four additional symptoms must also be present including changes in appetite, weight, sleep, and psychomotor activity; decreased energy; feelings of worthlessness or guilt; difficulty thinking, concentrating, or making decisions; or recurrent thoughts of death or suicidal ideation, plans, or attempts. The episode must be accompanied by distress or impairment in social, occupational, or other important areas of functioning.</description>
        <dbReference type="MIM" id="608516"/>
    </disease>
    <text>Disease susceptibility is associated with variants affecting the gene represented in this entry.</text>
</comment>
<comment type="similarity">
    <text evidence="5">Belongs to the G-protein coupled receptor 1 family. Muscarinic acetylcholine receptor subfamily. CHRM2 sub-subfamily.</text>
</comment>
<dbReference type="EMBL" id="M16404">
    <property type="protein sequence ID" value="AAA51570.1"/>
    <property type="molecule type" value="Genomic_DNA"/>
</dbReference>
<dbReference type="EMBL" id="X15264">
    <property type="protein sequence ID" value="CAA33335.1"/>
    <property type="molecule type" value="Genomic_DNA"/>
</dbReference>
<dbReference type="EMBL" id="AF498916">
    <property type="protein sequence ID" value="AAM18939.1"/>
    <property type="molecule type" value="mRNA"/>
</dbReference>
<dbReference type="EMBL" id="BC095547">
    <property type="protein sequence ID" value="AAH95547.1"/>
    <property type="molecule type" value="mRNA"/>
</dbReference>
<dbReference type="EMBL" id="BC106741">
    <property type="protein sequence ID" value="AAI06742.1"/>
    <property type="molecule type" value="mRNA"/>
</dbReference>
<dbReference type="EMBL" id="BC106742">
    <property type="protein sequence ID" value="AAI06743.1"/>
    <property type="molecule type" value="mRNA"/>
</dbReference>
<dbReference type="EMBL" id="AB041391">
    <property type="protein sequence ID" value="BAA94476.1"/>
    <property type="molecule type" value="Genomic_DNA"/>
</dbReference>
<dbReference type="CCDS" id="CCDS5843.1"/>
<dbReference type="PIR" id="S10126">
    <property type="entry name" value="S10126"/>
</dbReference>
<dbReference type="RefSeq" id="NP_000730.1">
    <property type="nucleotide sequence ID" value="NM_000739.3"/>
</dbReference>
<dbReference type="RefSeq" id="NP_001006627.1">
    <property type="nucleotide sequence ID" value="NM_001006626.3"/>
</dbReference>
<dbReference type="RefSeq" id="NP_001006628.1">
    <property type="nucleotide sequence ID" value="NM_001006627.3"/>
</dbReference>
<dbReference type="RefSeq" id="NP_001006629.1">
    <property type="nucleotide sequence ID" value="NM_001006628.3"/>
</dbReference>
<dbReference type="RefSeq" id="NP_001006630.1">
    <property type="nucleotide sequence ID" value="NM_001006629.3"/>
</dbReference>
<dbReference type="RefSeq" id="NP_001006631.1">
    <property type="nucleotide sequence ID" value="NM_001006630.2"/>
</dbReference>
<dbReference type="RefSeq" id="NP_001006632.1">
    <property type="nucleotide sequence ID" value="NM_001006631.3"/>
</dbReference>
<dbReference type="RefSeq" id="NP_001006633.1">
    <property type="nucleotide sequence ID" value="NM_001006632.3"/>
</dbReference>
<dbReference type="RefSeq" id="NP_001365901.1">
    <property type="nucleotide sequence ID" value="NM_001378972.1"/>
</dbReference>
<dbReference type="RefSeq" id="NP_001365902.1">
    <property type="nucleotide sequence ID" value="NM_001378973.1"/>
</dbReference>
<dbReference type="RefSeq" id="XP_011514071.1">
    <property type="nucleotide sequence ID" value="XM_011515769.2"/>
</dbReference>
<dbReference type="RefSeq" id="XP_047275803.1">
    <property type="nucleotide sequence ID" value="XM_047419847.1"/>
</dbReference>
<dbReference type="RefSeq" id="XP_054213154.1">
    <property type="nucleotide sequence ID" value="XM_054357179.1"/>
</dbReference>
<dbReference type="PDB" id="3UON">
    <property type="method" value="X-ray"/>
    <property type="resolution" value="3.00 A"/>
    <property type="chains" value="A=1-217, A=377-466"/>
</dbReference>
<dbReference type="PDB" id="4MQS">
    <property type="method" value="X-ray"/>
    <property type="resolution" value="3.50 A"/>
    <property type="chains" value="A=1-466"/>
</dbReference>
<dbReference type="PDB" id="4MQT">
    <property type="method" value="X-ray"/>
    <property type="resolution" value="3.70 A"/>
    <property type="chains" value="A=1-466"/>
</dbReference>
<dbReference type="PDB" id="5YC8">
    <property type="method" value="X-ray"/>
    <property type="resolution" value="2.50 A"/>
    <property type="chains" value="A=10-466"/>
</dbReference>
<dbReference type="PDB" id="5ZK3">
    <property type="method" value="X-ray"/>
    <property type="resolution" value="2.60 A"/>
    <property type="chains" value="A=10-466"/>
</dbReference>
<dbReference type="PDB" id="5ZK8">
    <property type="method" value="X-ray"/>
    <property type="resolution" value="3.00 A"/>
    <property type="chains" value="A=10-466"/>
</dbReference>
<dbReference type="PDB" id="5ZKB">
    <property type="method" value="X-ray"/>
    <property type="resolution" value="2.95 A"/>
    <property type="chains" value="A=10-466"/>
</dbReference>
<dbReference type="PDB" id="5ZKC">
    <property type="method" value="X-ray"/>
    <property type="resolution" value="2.30 A"/>
    <property type="chains" value="A=10-466"/>
</dbReference>
<dbReference type="PDB" id="6OIK">
    <property type="method" value="EM"/>
    <property type="resolution" value="3.60 A"/>
    <property type="chains" value="R=3-466"/>
</dbReference>
<dbReference type="PDB" id="6U1N">
    <property type="method" value="EM"/>
    <property type="resolution" value="4.00 A"/>
    <property type="chains" value="R=2-466"/>
</dbReference>
<dbReference type="PDB" id="7T8X">
    <property type="method" value="EM"/>
    <property type="resolution" value="3.21 A"/>
    <property type="chains" value="A=4-232, A=368-466"/>
</dbReference>
<dbReference type="PDB" id="7T90">
    <property type="method" value="EM"/>
    <property type="resolution" value="3.32 A"/>
    <property type="chains" value="A=4-232, A=368-466"/>
</dbReference>
<dbReference type="PDB" id="7T94">
    <property type="method" value="EM"/>
    <property type="resolution" value="3.16 A"/>
    <property type="chains" value="A=4-232, A=368-466"/>
</dbReference>
<dbReference type="PDB" id="7T96">
    <property type="method" value="EM"/>
    <property type="resolution" value="3.22 A"/>
    <property type="chains" value="A=4-232, A=368-466"/>
</dbReference>
<dbReference type="PDB" id="8J8R">
    <property type="method" value="EM"/>
    <property type="resolution" value="2.90 A"/>
    <property type="chains" value="G/U/V=300-317"/>
</dbReference>
<dbReference type="PDB" id="8J97">
    <property type="method" value="EM"/>
    <property type="resolution" value="3.20 A"/>
    <property type="chains" value="V=305-313"/>
</dbReference>
<dbReference type="PDB" id="8JAF">
    <property type="method" value="EM"/>
    <property type="resolution" value="3.10 A"/>
    <property type="chains" value="V=307-313"/>
</dbReference>
<dbReference type="PDBsum" id="3UON"/>
<dbReference type="PDBsum" id="4MQS"/>
<dbReference type="PDBsum" id="4MQT"/>
<dbReference type="PDBsum" id="5YC8"/>
<dbReference type="PDBsum" id="5ZK3"/>
<dbReference type="PDBsum" id="5ZK8"/>
<dbReference type="PDBsum" id="5ZKB"/>
<dbReference type="PDBsum" id="5ZKC"/>
<dbReference type="PDBsum" id="6OIK"/>
<dbReference type="PDBsum" id="6U1N"/>
<dbReference type="PDBsum" id="7T8X"/>
<dbReference type="PDBsum" id="7T90"/>
<dbReference type="PDBsum" id="7T94"/>
<dbReference type="PDBsum" id="7T96"/>
<dbReference type="PDBsum" id="8J8R"/>
<dbReference type="PDBsum" id="8J97"/>
<dbReference type="PDBsum" id="8JAF"/>
<dbReference type="EMDB" id="EMD-20079"/>
<dbReference type="EMDB" id="EMD-25748"/>
<dbReference type="EMDB" id="EMD-25749"/>
<dbReference type="EMDB" id="EMD-25751"/>
<dbReference type="EMDB" id="EMD-25752"/>
<dbReference type="EMDB" id="EMD-36078"/>
<dbReference type="EMDB" id="EMD-36090"/>
<dbReference type="EMDB" id="EMD-36126"/>
<dbReference type="SMR" id="P08172"/>
<dbReference type="BioGRID" id="107551">
    <property type="interactions" value="19"/>
</dbReference>
<dbReference type="CORUM" id="P08172"/>
<dbReference type="DIP" id="DIP-56282N"/>
<dbReference type="FunCoup" id="P08172">
    <property type="interactions" value="1486"/>
</dbReference>
<dbReference type="IntAct" id="P08172">
    <property type="interactions" value="23"/>
</dbReference>
<dbReference type="MINT" id="P08172"/>
<dbReference type="STRING" id="9606.ENSP00000399745"/>
<dbReference type="BindingDB" id="P08172"/>
<dbReference type="ChEMBL" id="CHEMBL211"/>
<dbReference type="DrugBank" id="DB13262">
    <property type="generic name" value="Aceclidine"/>
</dbReference>
<dbReference type="DrugBank" id="DB03128">
    <property type="generic name" value="Acetylcholine"/>
</dbReference>
<dbReference type="DrugBank" id="DB08897">
    <property type="generic name" value="Aclidinium"/>
</dbReference>
<dbReference type="DrugBank" id="DB05752">
    <property type="generic name" value="ALKS 27"/>
</dbReference>
<dbReference type="DrugBank" id="DB00321">
    <property type="generic name" value="Amitriptyline"/>
</dbReference>
<dbReference type="DrugBank" id="DB00543">
    <property type="generic name" value="Amoxapine"/>
</dbReference>
<dbReference type="DrugBank" id="DB00517">
    <property type="generic name" value="Anisotropine methylbromide"/>
</dbReference>
<dbReference type="DrugBank" id="DB01238">
    <property type="generic name" value="Aripiprazole"/>
</dbReference>
<dbReference type="DrugBank" id="DB14185">
    <property type="generic name" value="Aripiprazole lauroxil"/>
</dbReference>
<dbReference type="DrugBank" id="DB00572">
    <property type="generic name" value="Atropine"/>
</dbReference>
<dbReference type="DrugBank" id="DB00767">
    <property type="generic name" value="Benzquinamide"/>
</dbReference>
<dbReference type="DrugBank" id="DB01019">
    <property type="generic name" value="Bethanechol"/>
</dbReference>
<dbReference type="DrugBank" id="DB00835">
    <property type="generic name" value="Brompheniramine"/>
</dbReference>
<dbReference type="DrugBank" id="DB09300">
    <property type="generic name" value="Butylscopolamine"/>
</dbReference>
<dbReference type="DrugBank" id="DB11504">
    <property type="generic name" value="Caramiphen"/>
</dbReference>
<dbReference type="DrugBank" id="DB00411">
    <property type="generic name" value="Carbamoylcholine"/>
</dbReference>
<dbReference type="DrugBank" id="DB01239">
    <property type="generic name" value="Chlorprothixene"/>
</dbReference>
<dbReference type="DrugBank" id="DB00568">
    <property type="generic name" value="Cinnarizine"/>
</dbReference>
<dbReference type="DrugBank" id="DB00565">
    <property type="generic name" value="Cisatracurium"/>
</dbReference>
<dbReference type="DrugBank" id="DB00363">
    <property type="generic name" value="Clozapine"/>
</dbReference>
<dbReference type="DrugBank" id="DB00907">
    <property type="generic name" value="Cocaine"/>
</dbReference>
<dbReference type="DrugBank" id="DB00785">
    <property type="generic name" value="Cryptenamine"/>
</dbReference>
<dbReference type="DrugBank" id="DB00434">
    <property type="generic name" value="Cyproheptadine"/>
</dbReference>
<dbReference type="DrugBank" id="DB00496">
    <property type="generic name" value="Darifenacin"/>
</dbReference>
<dbReference type="DrugBank" id="DB01151">
    <property type="generic name" value="Desipramine"/>
</dbReference>
<dbReference type="DrugBank" id="DB00804">
    <property type="generic name" value="Dicyclomine"/>
</dbReference>
<dbReference type="DrugBank" id="DB08801">
    <property type="generic name" value="Dimetindene"/>
</dbReference>
<dbReference type="DrugBank" id="DB01075">
    <property type="generic name" value="Diphenhydramine"/>
</dbReference>
<dbReference type="DrugBank" id="DB01231">
    <property type="generic name" value="Diphenidol"/>
</dbReference>
<dbReference type="DrugBank" id="DB00280">
    <property type="generic name" value="Disopyramide"/>
</dbReference>
<dbReference type="DrugBank" id="DB09167">
    <property type="generic name" value="Dosulepin"/>
</dbReference>
<dbReference type="DrugBank" id="DB01135">
    <property type="generic name" value="Doxacurium"/>
</dbReference>
<dbReference type="DrugBank" id="DB01142">
    <property type="generic name" value="Doxepin"/>
</dbReference>
<dbReference type="DrugBank" id="DB00366">
    <property type="generic name" value="Doxylamine"/>
</dbReference>
<dbReference type="DrugBank" id="DB09194">
    <property type="generic name" value="Etoperidone"/>
</dbReference>
<dbReference type="DrugBank" id="DB06702">
    <property type="generic name" value="Fesoterodine"/>
</dbReference>
<dbReference type="DrugBank" id="DB01148">
    <property type="generic name" value="Flavoxate"/>
</dbReference>
<dbReference type="DrugBank" id="DB00483">
    <property type="generic name" value="Gallamine triethiodide"/>
</dbReference>
<dbReference type="DrugBank" id="DB00986">
    <property type="generic name" value="Glycopyrronium"/>
</dbReference>
<dbReference type="DrugBank" id="DB06787">
    <property type="generic name" value="Hexocyclium"/>
</dbReference>
<dbReference type="DrugBank" id="DB11181">
    <property type="generic name" value="Homatropine"/>
</dbReference>
<dbReference type="DrugBank" id="DB00725">
    <property type="generic name" value="Homatropine methylbromide"/>
</dbReference>
<dbReference type="DrugBank" id="DB00424">
    <property type="generic name" value="Hyoscyamine"/>
</dbReference>
<dbReference type="DrugBank" id="DB09262">
    <property type="generic name" value="Imidafenacin"/>
</dbReference>
<dbReference type="DrugBank" id="DB00458">
    <property type="generic name" value="Imipramine"/>
</dbReference>
<dbReference type="DrugBank" id="DB00332">
    <property type="generic name" value="Ipratropium"/>
</dbReference>
<dbReference type="DrugBank" id="DB01221">
    <property type="generic name" value="Ketamine"/>
</dbReference>
<dbReference type="DrugBank" id="DB00408">
    <property type="generic name" value="Loxapine"/>
</dbReference>
<dbReference type="DrugBank" id="DB00934">
    <property type="generic name" value="Maprotiline"/>
</dbReference>
<dbReference type="DrugBank" id="DB00454">
    <property type="generic name" value="Meperidine"/>
</dbReference>
<dbReference type="DrugBank" id="DB06709">
    <property type="generic name" value="Methacholine"/>
</dbReference>
<dbReference type="DrugBank" id="DB00940">
    <property type="generic name" value="Methantheline"/>
</dbReference>
<dbReference type="DrugBank" id="DB01403">
    <property type="generic name" value="Methotrimeprazine"/>
</dbReference>
<dbReference type="DrugBank" id="DB11315">
    <property type="generic name" value="Methscopolamine"/>
</dbReference>
<dbReference type="DrugBank" id="DB00462">
    <property type="generic name" value="Methscopolamine bromide"/>
</dbReference>
<dbReference type="DrugBank" id="DB00340">
    <property type="generic name" value="Metixene"/>
</dbReference>
<dbReference type="DrugBank" id="DB01336">
    <property type="generic name" value="Metocurine"/>
</dbReference>
<dbReference type="DrugBank" id="DB01226">
    <property type="generic name" value="Mivacurium"/>
</dbReference>
<dbReference type="DrugBank" id="DB00622">
    <property type="generic name" value="Nicardipine"/>
</dbReference>
<dbReference type="DrugBank" id="DB00540">
    <property type="generic name" value="Nortriptyline"/>
</dbReference>
<dbReference type="DrugBank" id="DB00334">
    <property type="generic name" value="Olanzapine"/>
</dbReference>
<dbReference type="DrugBank" id="DB01062">
    <property type="generic name" value="Oxybutynin"/>
</dbReference>
<dbReference type="DrugBank" id="DB00383">
    <property type="generic name" value="Oxyphencyclimine"/>
</dbReference>
<dbReference type="DrugBank" id="DB01337">
    <property type="generic name" value="Pancuronium"/>
</dbReference>
<dbReference type="DrugBank" id="DB00715">
    <property type="generic name" value="Paroxetine"/>
</dbReference>
<dbReference type="DrugBank" id="DB01085">
    <property type="generic name" value="Pilocarpine"/>
</dbReference>
<dbReference type="DrugBank" id="DB01338">
    <property type="generic name" value="Pipecuronium"/>
</dbReference>
<dbReference type="DrugBank" id="DB06153">
    <property type="generic name" value="Pizotifen"/>
</dbReference>
<dbReference type="DrugBank" id="DB00387">
    <property type="generic name" value="Procyclidine"/>
</dbReference>
<dbReference type="DrugBank" id="DB00392">
    <property type="generic name" value="Profenamine"/>
</dbReference>
<dbReference type="DrugBank" id="DB01069">
    <property type="generic name" value="Promethazine"/>
</dbReference>
<dbReference type="DrugBank" id="DB00777">
    <property type="generic name" value="Propiomazine"/>
</dbReference>
<dbReference type="DrugBank" id="DB12278">
    <property type="generic name" value="Propiverine"/>
</dbReference>
<dbReference type="DrugBank" id="DB01224">
    <property type="generic name" value="Quetiapine"/>
</dbReference>
<dbReference type="DrugBank" id="DB04834">
    <property type="generic name" value="Rapacuronium"/>
</dbReference>
<dbReference type="DrugBank" id="DB11855">
    <property type="generic name" value="Revefenacin"/>
</dbReference>
<dbReference type="DrugBank" id="DB13581">
    <property type="generic name" value="Rociverine"/>
</dbReference>
<dbReference type="DrugBank" id="DB00728">
    <property type="generic name" value="Rocuronium"/>
</dbReference>
<dbReference type="DrugBank" id="DB00747">
    <property type="generic name" value="Scopolamine"/>
</dbReference>
<dbReference type="DrugBank" id="DB19325">
    <property type="generic name" value="Sofpironium"/>
</dbReference>
<dbReference type="DrugBank" id="DB01591">
    <property type="generic name" value="Solifenacin"/>
</dbReference>
<dbReference type="DrugBank" id="DB00202">
    <property type="generic name" value="Succinylcholine"/>
</dbReference>
<dbReference type="DrugBank" id="DB00342">
    <property type="generic name" value="Terfenadine"/>
</dbReference>
<dbReference type="DrugBank" id="DB11235">
    <property type="generic name" value="Thonzylamine"/>
</dbReference>
<dbReference type="DrugBank" id="DB01409">
    <property type="generic name" value="Tiotropium"/>
</dbReference>
<dbReference type="DrugBank" id="DB01036">
    <property type="generic name" value="Tolterodine"/>
</dbReference>
<dbReference type="DrugBank" id="DB00505">
    <property type="generic name" value="Tridihexethyl"/>
</dbReference>
<dbReference type="DrugBank" id="DB00508">
    <property type="generic name" value="Triflupromazine"/>
</dbReference>
<dbReference type="DrugBank" id="DB00376">
    <property type="generic name" value="Trihexyphenidyl"/>
</dbReference>
<dbReference type="DrugBank" id="DB09089">
    <property type="generic name" value="Trimebutine"/>
</dbReference>
<dbReference type="DrugBank" id="DB00726">
    <property type="generic name" value="Trimipramine"/>
</dbReference>
<dbReference type="DrugBank" id="DB00809">
    <property type="generic name" value="Tropicamide"/>
</dbReference>
<dbReference type="DrugBank" id="DB09076">
    <property type="generic name" value="Umeclidinium"/>
</dbReference>
<dbReference type="DrugBank" id="DB09185">
    <property type="generic name" value="Viloxazine"/>
</dbReference>
<dbReference type="DrugBank" id="DB15357">
    <property type="generic name" value="Xanomeline"/>
</dbReference>
<dbReference type="DrugBank" id="DB00246">
    <property type="generic name" value="Ziprasidone"/>
</dbReference>
<dbReference type="DrugCentral" id="P08172"/>
<dbReference type="GuidetoPHARMACOLOGY" id="14"/>
<dbReference type="GlyCosmos" id="P08172">
    <property type="glycosylation" value="4 sites, No reported glycans"/>
</dbReference>
<dbReference type="GlyGen" id="P08172">
    <property type="glycosylation" value="5 sites, 1 O-linked glycan (1 site)"/>
</dbReference>
<dbReference type="iPTMnet" id="P08172"/>
<dbReference type="PhosphoSitePlus" id="P08172"/>
<dbReference type="SwissPalm" id="P08172"/>
<dbReference type="BioMuta" id="CHRM2"/>
<dbReference type="DMDM" id="113122"/>
<dbReference type="MassIVE" id="P08172"/>
<dbReference type="PaxDb" id="9606-ENSP00000399745"/>
<dbReference type="PeptideAtlas" id="P08172"/>
<dbReference type="ProteomicsDB" id="52076"/>
<dbReference type="ABCD" id="P08172">
    <property type="antibodies" value="19 sequenced antibodies"/>
</dbReference>
<dbReference type="Antibodypedia" id="18171">
    <property type="antibodies" value="572 antibodies from 39 providers"/>
</dbReference>
<dbReference type="DNASU" id="1129"/>
<dbReference type="Ensembl" id="ENST00000320658.9">
    <property type="protein sequence ID" value="ENSP00000319984.5"/>
    <property type="gene ID" value="ENSG00000181072.12"/>
</dbReference>
<dbReference type="Ensembl" id="ENST00000401861.1">
    <property type="protein sequence ID" value="ENSP00000384401.1"/>
    <property type="gene ID" value="ENSG00000181072.12"/>
</dbReference>
<dbReference type="Ensembl" id="ENST00000445907.6">
    <property type="protein sequence ID" value="ENSP00000399745.2"/>
    <property type="gene ID" value="ENSG00000181072.12"/>
</dbReference>
<dbReference type="Ensembl" id="ENST00000453373.5">
    <property type="protein sequence ID" value="ENSP00000415386.1"/>
    <property type="gene ID" value="ENSG00000181072.12"/>
</dbReference>
<dbReference type="Ensembl" id="ENST00000680005.1">
    <property type="protein sequence ID" value="ENSP00000505686.1"/>
    <property type="gene ID" value="ENSG00000181072.12"/>
</dbReference>
<dbReference type="GeneID" id="1129"/>
<dbReference type="KEGG" id="hsa:1129"/>
<dbReference type="MANE-Select" id="ENST00000680005.1">
    <property type="protein sequence ID" value="ENSP00000505686.1"/>
    <property type="RefSeq nucleotide sequence ID" value="NM_001006630.2"/>
    <property type="RefSeq protein sequence ID" value="NP_001006631.1"/>
</dbReference>
<dbReference type="UCSC" id="uc003vtg.2">
    <property type="organism name" value="human"/>
</dbReference>
<dbReference type="AGR" id="HGNC:1951"/>
<dbReference type="CTD" id="1129"/>
<dbReference type="DisGeNET" id="1129"/>
<dbReference type="GeneCards" id="CHRM2"/>
<dbReference type="HGNC" id="HGNC:1951">
    <property type="gene designation" value="CHRM2"/>
</dbReference>
<dbReference type="HPA" id="ENSG00000181072">
    <property type="expression patterns" value="Tissue enhanced (heart muscle, intestine)"/>
</dbReference>
<dbReference type="MalaCards" id="CHRM2"/>
<dbReference type="MIM" id="103780">
    <property type="type" value="phenotype"/>
</dbReference>
<dbReference type="MIM" id="118493">
    <property type="type" value="gene"/>
</dbReference>
<dbReference type="MIM" id="608516">
    <property type="type" value="phenotype"/>
</dbReference>
<dbReference type="neXtProt" id="NX_P08172"/>
<dbReference type="OpenTargets" id="ENSG00000181072"/>
<dbReference type="PharmGKB" id="PA111"/>
<dbReference type="VEuPathDB" id="HostDB:ENSG00000181072"/>
<dbReference type="eggNOG" id="KOG4220">
    <property type="taxonomic scope" value="Eukaryota"/>
</dbReference>
<dbReference type="GeneTree" id="ENSGT00940000158940"/>
<dbReference type="HOGENOM" id="CLU_009579_11_2_1"/>
<dbReference type="InParanoid" id="P08172"/>
<dbReference type="OMA" id="TSERQNH"/>
<dbReference type="OrthoDB" id="10071887at2759"/>
<dbReference type="PAN-GO" id="P08172">
    <property type="GO annotations" value="9 GO annotations based on evolutionary models"/>
</dbReference>
<dbReference type="PhylomeDB" id="P08172"/>
<dbReference type="TreeFam" id="TF320495"/>
<dbReference type="PathwayCommons" id="P08172"/>
<dbReference type="Reactome" id="R-HSA-390648">
    <property type="pathway name" value="Muscarinic acetylcholine receptors"/>
</dbReference>
<dbReference type="Reactome" id="R-HSA-418594">
    <property type="pathway name" value="G alpha (i) signalling events"/>
</dbReference>
<dbReference type="Reactome" id="R-HSA-8856825">
    <property type="pathway name" value="Cargo recognition for clathrin-mediated endocytosis"/>
</dbReference>
<dbReference type="Reactome" id="R-HSA-8856828">
    <property type="pathway name" value="Clathrin-mediated endocytosis"/>
</dbReference>
<dbReference type="SignaLink" id="P08172"/>
<dbReference type="SIGNOR" id="P08172"/>
<dbReference type="BioGRID-ORCS" id="1129">
    <property type="hits" value="13 hits in 1151 CRISPR screens"/>
</dbReference>
<dbReference type="ChiTaRS" id="CHRM2">
    <property type="organism name" value="human"/>
</dbReference>
<dbReference type="EvolutionaryTrace" id="P08172"/>
<dbReference type="GeneWiki" id="Muscarinic_acetylcholine_receptor_M2"/>
<dbReference type="GenomeRNAi" id="1129"/>
<dbReference type="Pharos" id="P08172">
    <property type="development level" value="Tclin"/>
</dbReference>
<dbReference type="PRO" id="PR:P08172"/>
<dbReference type="Proteomes" id="UP000005640">
    <property type="component" value="Chromosome 7"/>
</dbReference>
<dbReference type="RNAct" id="P08172">
    <property type="molecule type" value="protein"/>
</dbReference>
<dbReference type="Bgee" id="ENSG00000181072">
    <property type="expression patterns" value="Expressed in stromal cell of endometrium and 69 other cell types or tissues"/>
</dbReference>
<dbReference type="ExpressionAtlas" id="P08172">
    <property type="expression patterns" value="baseline and differential"/>
</dbReference>
<dbReference type="GO" id="GO:0098981">
    <property type="term" value="C:cholinergic synapse"/>
    <property type="evidence" value="ECO:0007669"/>
    <property type="project" value="Ensembl"/>
</dbReference>
<dbReference type="GO" id="GO:0036064">
    <property type="term" value="C:ciliary basal body"/>
    <property type="evidence" value="ECO:0000314"/>
    <property type="project" value="HPA"/>
</dbReference>
<dbReference type="GO" id="GO:0005929">
    <property type="term" value="C:cilium"/>
    <property type="evidence" value="ECO:0000314"/>
    <property type="project" value="HPA"/>
</dbReference>
<dbReference type="GO" id="GO:0030669">
    <property type="term" value="C:clathrin-coated endocytic vesicle membrane"/>
    <property type="evidence" value="ECO:0000304"/>
    <property type="project" value="Reactome"/>
</dbReference>
<dbReference type="GO" id="GO:0030425">
    <property type="term" value="C:dendrite"/>
    <property type="evidence" value="ECO:0000318"/>
    <property type="project" value="GO_Central"/>
</dbReference>
<dbReference type="GO" id="GO:0005794">
    <property type="term" value="C:Golgi apparatus"/>
    <property type="evidence" value="ECO:0000314"/>
    <property type="project" value="HPA"/>
</dbReference>
<dbReference type="GO" id="GO:0016020">
    <property type="term" value="C:membrane"/>
    <property type="evidence" value="ECO:0000314"/>
    <property type="project" value="CAFA"/>
</dbReference>
<dbReference type="GO" id="GO:0005730">
    <property type="term" value="C:nucleolus"/>
    <property type="evidence" value="ECO:0000314"/>
    <property type="project" value="HPA"/>
</dbReference>
<dbReference type="GO" id="GO:0005886">
    <property type="term" value="C:plasma membrane"/>
    <property type="evidence" value="ECO:0000314"/>
    <property type="project" value="UniProtKB"/>
</dbReference>
<dbReference type="GO" id="GO:0045211">
    <property type="term" value="C:postsynaptic membrane"/>
    <property type="evidence" value="ECO:0007669"/>
    <property type="project" value="UniProtKB-SubCell"/>
</dbReference>
<dbReference type="GO" id="GO:0098793">
    <property type="term" value="C:presynapse"/>
    <property type="evidence" value="ECO:0007669"/>
    <property type="project" value="GOC"/>
</dbReference>
<dbReference type="GO" id="GO:0045202">
    <property type="term" value="C:synapse"/>
    <property type="evidence" value="ECO:0000318"/>
    <property type="project" value="GO_Central"/>
</dbReference>
<dbReference type="GO" id="GO:1990763">
    <property type="term" value="F:arrestin family protein binding"/>
    <property type="evidence" value="ECO:0000353"/>
    <property type="project" value="CAFA"/>
</dbReference>
<dbReference type="GO" id="GO:0016907">
    <property type="term" value="F:G protein-coupled acetylcholine receptor activity"/>
    <property type="evidence" value="ECO:0000314"/>
    <property type="project" value="UniProtKB"/>
</dbReference>
<dbReference type="GO" id="GO:0007197">
    <property type="term" value="P:adenylate cyclase-inhibiting G protein-coupled acetylcholine receptor signaling pathway"/>
    <property type="evidence" value="ECO:0000318"/>
    <property type="project" value="GO_Central"/>
</dbReference>
<dbReference type="GO" id="GO:0007188">
    <property type="term" value="P:adenylate cyclase-modulating G protein-coupled receptor signaling pathway"/>
    <property type="evidence" value="ECO:0000304"/>
    <property type="project" value="ProtInc"/>
</dbReference>
<dbReference type="GO" id="GO:0007268">
    <property type="term" value="P:chemical synaptic transmission"/>
    <property type="evidence" value="ECO:0000318"/>
    <property type="project" value="GO_Central"/>
</dbReference>
<dbReference type="GO" id="GO:0007213">
    <property type="term" value="P:G protein-coupled acetylcholine receptor signaling pathway"/>
    <property type="evidence" value="ECO:0000314"/>
    <property type="project" value="UniProtKB"/>
</dbReference>
<dbReference type="GO" id="GO:0007186">
    <property type="term" value="P:G protein-coupled receptor signaling pathway"/>
    <property type="evidence" value="ECO:0000304"/>
    <property type="project" value="ProtInc"/>
</dbReference>
<dbReference type="GO" id="GO:0007187">
    <property type="term" value="P:G protein-coupled receptor signaling pathway, coupled to cyclic nucleotide second messenger"/>
    <property type="evidence" value="ECO:0000318"/>
    <property type="project" value="GO_Central"/>
</dbReference>
<dbReference type="GO" id="GO:0007399">
    <property type="term" value="P:nervous system development"/>
    <property type="evidence" value="ECO:0000304"/>
    <property type="project" value="ProtInc"/>
</dbReference>
<dbReference type="GO" id="GO:0007207">
    <property type="term" value="P:phospholipase C-activating G protein-coupled acetylcholine receptor signaling pathway"/>
    <property type="evidence" value="ECO:0000304"/>
    <property type="project" value="ProtInc"/>
</dbReference>
<dbReference type="GO" id="GO:0099171">
    <property type="term" value="P:presynaptic modulation of chemical synaptic transmission"/>
    <property type="evidence" value="ECO:0007669"/>
    <property type="project" value="Ensembl"/>
</dbReference>
<dbReference type="GO" id="GO:0008016">
    <property type="term" value="P:regulation of heart contraction"/>
    <property type="evidence" value="ECO:0000304"/>
    <property type="project" value="ProtInc"/>
</dbReference>
<dbReference type="GO" id="GO:0006940">
    <property type="term" value="P:regulation of smooth muscle contraction"/>
    <property type="evidence" value="ECO:0000318"/>
    <property type="project" value="GO_Central"/>
</dbReference>
<dbReference type="GO" id="GO:0009615">
    <property type="term" value="P:response to virus"/>
    <property type="evidence" value="ECO:0000270"/>
    <property type="project" value="UniProtKB"/>
</dbReference>
<dbReference type="CDD" id="cd15297">
    <property type="entry name" value="7tmA_mAChR_M2"/>
    <property type="match status" value="1"/>
</dbReference>
<dbReference type="FunFam" id="1.20.1070.10:FF:000038">
    <property type="entry name" value="Muscarinic acetylcholine receptor"/>
    <property type="match status" value="1"/>
</dbReference>
<dbReference type="FunFam" id="1.20.1070.10:FF:000041">
    <property type="entry name" value="Muscarinic acetylcholine receptor"/>
    <property type="match status" value="1"/>
</dbReference>
<dbReference type="Gene3D" id="1.20.1070.10">
    <property type="entry name" value="Rhodopsin 7-helix transmembrane proteins"/>
    <property type="match status" value="2"/>
</dbReference>
<dbReference type="InterPro" id="IPR000276">
    <property type="entry name" value="GPCR_Rhodpsn"/>
</dbReference>
<dbReference type="InterPro" id="IPR017452">
    <property type="entry name" value="GPCR_Rhodpsn_7TM"/>
</dbReference>
<dbReference type="InterPro" id="IPR001065">
    <property type="entry name" value="Musac_Ach_M2_rcpt"/>
</dbReference>
<dbReference type="InterPro" id="IPR000995">
    <property type="entry name" value="Musac_Ach_rcpt"/>
</dbReference>
<dbReference type="PANTHER" id="PTHR24247">
    <property type="entry name" value="5-HYDROXYTRYPTAMINE RECEPTOR"/>
    <property type="match status" value="1"/>
</dbReference>
<dbReference type="PANTHER" id="PTHR24247:SF207">
    <property type="entry name" value="MUSCARINIC ACETYLCHOLINE RECEPTOR M2"/>
    <property type="match status" value="1"/>
</dbReference>
<dbReference type="Pfam" id="PF00001">
    <property type="entry name" value="7tm_1"/>
    <property type="match status" value="1"/>
</dbReference>
<dbReference type="PRINTS" id="PR00237">
    <property type="entry name" value="GPCRRHODOPSN"/>
</dbReference>
<dbReference type="PRINTS" id="PR00243">
    <property type="entry name" value="MUSCARINICR"/>
</dbReference>
<dbReference type="PRINTS" id="PR00539">
    <property type="entry name" value="MUSCRINICM2R"/>
</dbReference>
<dbReference type="SMART" id="SM01381">
    <property type="entry name" value="7TM_GPCR_Srsx"/>
    <property type="match status" value="1"/>
</dbReference>
<dbReference type="SUPFAM" id="SSF81321">
    <property type="entry name" value="Family A G protein-coupled receptor-like"/>
    <property type="match status" value="1"/>
</dbReference>
<dbReference type="PROSITE" id="PS00237">
    <property type="entry name" value="G_PROTEIN_RECEP_F1_1"/>
    <property type="match status" value="1"/>
</dbReference>
<dbReference type="PROSITE" id="PS50262">
    <property type="entry name" value="G_PROTEIN_RECEP_F1_2"/>
    <property type="match status" value="1"/>
</dbReference>
<organism>
    <name type="scientific">Homo sapiens</name>
    <name type="common">Human</name>
    <dbReference type="NCBI Taxonomy" id="9606"/>
    <lineage>
        <taxon>Eukaryota</taxon>
        <taxon>Metazoa</taxon>
        <taxon>Chordata</taxon>
        <taxon>Craniata</taxon>
        <taxon>Vertebrata</taxon>
        <taxon>Euteleostomi</taxon>
        <taxon>Mammalia</taxon>
        <taxon>Eutheria</taxon>
        <taxon>Euarchontoglires</taxon>
        <taxon>Primates</taxon>
        <taxon>Haplorrhini</taxon>
        <taxon>Catarrhini</taxon>
        <taxon>Hominidae</taxon>
        <taxon>Homo</taxon>
    </lineage>
</organism>
<reference key="1">
    <citation type="journal article" date="1987" name="Science">
        <title>Identification of a family of muscarinic acetylcholine receptor genes.</title>
        <authorList>
            <person name="Bonner T.I."/>
            <person name="Buckley N.J."/>
            <person name="Young A.C."/>
            <person name="Brann M.R."/>
        </authorList>
    </citation>
    <scope>NUCLEOTIDE SEQUENCE [GENOMIC DNA]</scope>
</reference>
<reference key="2">
    <citation type="journal article" date="1987" name="EMBO J.">
        <title>Distinct primary structures, ligand-binding properties and tissue-specific expression of four human muscarinic acetylcholine receptors.</title>
        <authorList>
            <person name="Peralta E.G."/>
            <person name="Ashkenazi A."/>
            <person name="Winslow J.W."/>
            <person name="Smith D.H."/>
            <person name="Ramachandran J."/>
            <person name="Capon D.J."/>
        </authorList>
    </citation>
    <scope>NUCLEOTIDE SEQUENCE [GENOMIC DNA]</scope>
    <scope>FUNCTION</scope>
    <scope>SUBCELLULAR LOCATION</scope>
</reference>
<reference key="3">
    <citation type="submission" date="2002-04" db="EMBL/GenBank/DDBJ databases">
        <title>cDNA clones of human proteins involved in signal transduction sequenced by the Guthrie cDNA resource center (www.cdna.org).</title>
        <authorList>
            <person name="Puhl H.L. III"/>
            <person name="Ikeda S.R."/>
            <person name="Aronstam R.S."/>
        </authorList>
    </citation>
    <scope>NUCLEOTIDE SEQUENCE [LARGE SCALE MRNA]</scope>
    <source>
        <tissue>Brain</tissue>
    </source>
</reference>
<reference key="4">
    <citation type="journal article" date="2004" name="Genome Res.">
        <title>The status, quality, and expansion of the NIH full-length cDNA project: the Mammalian Gene Collection (MGC).</title>
        <authorList>
            <consortium name="The MGC Project Team"/>
        </authorList>
    </citation>
    <scope>NUCLEOTIDE SEQUENCE [LARGE SCALE MRNA]</scope>
</reference>
<reference key="5">
    <citation type="journal article" date="2004" name="Mol. Biol. Evol.">
        <title>Human-specific amino acid changes found in 103 protein-coding genes.</title>
        <authorList>
            <person name="Kitano T."/>
            <person name="Liu Y.-H."/>
            <person name="Ueda S."/>
            <person name="Saitou N."/>
        </authorList>
    </citation>
    <scope>NUCLEOTIDE SEQUENCE [GENOMIC DNA] OF 27-466</scope>
</reference>
<reference key="6">
    <citation type="journal article" date="1995" name="J. Biol. Chem.">
        <title>Arrestin interactions with G protein-coupled receptors. Direct binding studies of wild type and mutant arrestins with rhodopsin, beta 2-adrenergic, and m2 muscarinic cholinergic receptors.</title>
        <authorList>
            <person name="Gurevich V.V."/>
            <person name="Dion S.B."/>
            <person name="Onorato J.J."/>
            <person name="Ptasienski J."/>
            <person name="Kim C.M."/>
            <person name="Sterne-Marr R."/>
            <person name="Hosey M.M."/>
            <person name="Benovic J.L."/>
        </authorList>
    </citation>
    <scope>INTERACTION WITH ARRB1 AND ARRB2</scope>
</reference>
<reference key="7">
    <citation type="journal article" date="2006" name="Cell. Microbiol.">
        <title>Transcriptomic and proteomic analyses of rhabdomyosarcoma cells reveal differential cellular gene expression in response to enterovirus 71 infection.</title>
        <authorList>
            <person name="Leong W.F."/>
            <person name="Chow V.T."/>
        </authorList>
    </citation>
    <scope>INDUCTION</scope>
    <scope>IDENTIFICATION BY MASS SPECTROMETRY</scope>
</reference>
<reference key="8">
    <citation type="journal article" date="2004" name="Hum. Mol. Genet.">
        <title>Evidence of common and specific genetic effects: association of the muscarinic acetylcholine receptor M2 (CHRM2) gene with alcohol dependence and major depressive syndrome.</title>
        <authorList>
            <person name="Wang J.C."/>
            <person name="Hinrichs A.L."/>
            <person name="Stock H."/>
            <person name="Budde J."/>
            <person name="Allen R."/>
            <person name="Bertelsen S."/>
            <person name="Kwon J.M."/>
            <person name="Wu W."/>
            <person name="Dick D.M."/>
            <person name="Rice J."/>
            <person name="Jones K."/>
            <person name="Nurnberger J.I. Jr."/>
            <person name="Tischfield J."/>
            <person name="Porjesz B."/>
            <person name="Edenberg H.J."/>
            <person name="Hesselbrock V."/>
            <person name="Crowe R."/>
            <person name="Schuckit M."/>
            <person name="Begleiter H."/>
            <person name="Reich T."/>
            <person name="Goate A.M."/>
            <person name="Bierut L.J."/>
        </authorList>
    </citation>
    <scope>INVOLVEMENT IN SUSCEPTIBILITY TO ALCOHOLISM AND MAJOR DEPRESSIVE DISORDER</scope>
</reference>
<reference key="9">
    <citation type="journal article" date="2010" name="PLoS ONE">
        <title>RACK1 associates with muscarinic receptors and regulates M(2) receptor trafficking.</title>
        <authorList>
            <person name="Reiner C.L."/>
            <person name="McCullar J.S."/>
            <person name="Kow R.L."/>
            <person name="Le J.H."/>
            <person name="Goodlett D.R."/>
            <person name="Nathanson N.M."/>
        </authorList>
    </citation>
    <scope>INTERACTION WITH RACK1</scope>
</reference>
<reference key="10">
    <citation type="journal article" date="2012" name="Nature">
        <title>Structure of the human M2 muscarinic acetylcholine receptor bound to an antagonist.</title>
        <authorList>
            <person name="Haga K."/>
            <person name="Kruse A.C."/>
            <person name="Asada H."/>
            <person name="Yurugi-Kobayashi T."/>
            <person name="Shiroishi M."/>
            <person name="Zhang C."/>
            <person name="Weis W.I."/>
            <person name="Okada T."/>
            <person name="Kobilka B.K."/>
            <person name="Haga T."/>
            <person name="Kobayashi T."/>
        </authorList>
    </citation>
    <scope>X-RAY CRYSTALLOGRAPHY (3.00 ANGSTROMS) IN COMPLEX WITH THE ANTAGONIST 3-QUINUCLIDINYLBENZILATE</scope>
    <scope>SUBCELLULAR LOCATION</scope>
    <scope>TOPOLOGY</scope>
    <scope>DISULFIDE BOND</scope>
</reference>
<reference key="11">
    <citation type="journal article" date="2013" name="Nature">
        <title>Activation and allosteric modulation of a muscarinic acetylcholine receptor.</title>
        <authorList>
            <person name="Kruse A.C."/>
            <person name="Ring A.M."/>
            <person name="Manglik A."/>
            <person name="Hu J."/>
            <person name="Hu K."/>
            <person name="Eitel K."/>
            <person name="Hubner H."/>
            <person name="Pardon E."/>
            <person name="Valant C."/>
            <person name="Sexton P.M."/>
            <person name="Christopoulos A."/>
            <person name="Felder C.C."/>
            <person name="Gmeiner P."/>
            <person name="Steyaert J."/>
            <person name="Weis W.I."/>
            <person name="Garcia K.C."/>
            <person name="Wess J."/>
            <person name="Kobilka B.K."/>
        </authorList>
    </citation>
    <scope>X-RAY CRYSTALLOGRAPHY (3.50 ANGSTROMS) IN COMPLEXES WITH THE AGONIST IPEROXO AND THE ALLOSTERIC EFFECTOR LY2119620</scope>
    <scope>FUNCTION</scope>
    <scope>SUBCELLULAR LOCATION</scope>
    <scope>TOPOLOGY</scope>
    <scope>DISULFIDE BOND</scope>
    <scope>MOTIF</scope>
    <scope>MUTAGENESIS OF ASN-58; ASP-103; TYR-206 AND ASN-404</scope>
</reference>
<feature type="chain" id="PRO_0000069021" description="Muscarinic acetylcholine receptor M2">
    <location>
        <begin position="1"/>
        <end position="466"/>
    </location>
</feature>
<feature type="topological domain" description="Extracellular">
    <location>
        <begin position="1"/>
        <end position="22"/>
    </location>
</feature>
<feature type="transmembrane region" description="Helical; Name=1">
    <location>
        <begin position="23"/>
        <end position="45"/>
    </location>
</feature>
<feature type="topological domain" description="Cytoplasmic">
    <location>
        <begin position="46"/>
        <end position="59"/>
    </location>
</feature>
<feature type="transmembrane region" description="Helical; Name=2">
    <location>
        <begin position="60"/>
        <end position="80"/>
    </location>
</feature>
<feature type="topological domain" description="Extracellular">
    <location>
        <begin position="81"/>
        <end position="97"/>
    </location>
</feature>
<feature type="transmembrane region" description="Helical; Name=3">
    <location>
        <begin position="98"/>
        <end position="119"/>
    </location>
</feature>
<feature type="topological domain" description="Cytoplasmic">
    <location>
        <begin position="120"/>
        <end position="139"/>
    </location>
</feature>
<feature type="transmembrane region" description="Helical; Name=4">
    <location>
        <begin position="140"/>
        <end position="162"/>
    </location>
</feature>
<feature type="topological domain" description="Extracellular">
    <location>
        <begin position="163"/>
        <end position="184"/>
    </location>
</feature>
<feature type="transmembrane region" description="Helical; Name=5">
    <location>
        <begin position="185"/>
        <end position="209"/>
    </location>
</feature>
<feature type="topological domain" description="Cytoplasmic">
    <location>
        <begin position="210"/>
        <end position="387"/>
    </location>
</feature>
<feature type="transmembrane region" description="Helical; Name=6">
    <location>
        <begin position="388"/>
        <end position="410"/>
    </location>
</feature>
<feature type="topological domain" description="Extracellular">
    <location>
        <begin position="411"/>
        <end position="418"/>
    </location>
</feature>
<feature type="transmembrane region" description="Helical; Name=7">
    <location>
        <begin position="419"/>
        <end position="442"/>
    </location>
</feature>
<feature type="topological domain" description="Cytoplasmic">
    <location>
        <begin position="443"/>
        <end position="466"/>
    </location>
</feature>
<feature type="region of interest" description="Disordered" evidence="6">
    <location>
        <begin position="218"/>
        <end position="355"/>
    </location>
</feature>
<feature type="short sequence motif" description="Important for signaling">
    <location>
        <begin position="120"/>
        <end position="122"/>
    </location>
</feature>
<feature type="short sequence motif" description="Important for signaling">
    <location>
        <begin position="436"/>
        <end position="440"/>
    </location>
</feature>
<feature type="compositionally biased region" description="Basic and acidic residues" evidence="6">
    <location>
        <begin position="254"/>
        <end position="270"/>
    </location>
</feature>
<feature type="compositionally biased region" description="Polar residues" evidence="6">
    <location>
        <begin position="284"/>
        <end position="293"/>
    </location>
</feature>
<feature type="compositionally biased region" description="Polar residues" evidence="6">
    <location>
        <begin position="304"/>
        <end position="313"/>
    </location>
</feature>
<feature type="compositionally biased region" description="Polar residues" evidence="6">
    <location>
        <begin position="334"/>
        <end position="353"/>
    </location>
</feature>
<feature type="modified residue" description="Phosphoserine" evidence="3">
    <location>
        <position position="232"/>
    </location>
</feature>
<feature type="modified residue" description="Phosphothreonine" evidence="4">
    <location>
        <position position="446"/>
    </location>
</feature>
<feature type="modified residue" description="Phosphothreonine" evidence="4">
    <location>
        <position position="450"/>
    </location>
</feature>
<feature type="modified residue" description="Phosphothreonine" evidence="4">
    <location>
        <position position="465"/>
    </location>
</feature>
<feature type="glycosylation site" description="N-linked (GlcNAc...) asparagine" evidence="4">
    <location>
        <position position="2"/>
    </location>
</feature>
<feature type="glycosylation site" description="N-linked (GlcNAc...) asparagine" evidence="4">
    <location>
        <position position="3"/>
    </location>
</feature>
<feature type="glycosylation site" description="N-linked (GlcNAc...) asparagine" evidence="4">
    <location>
        <position position="6"/>
    </location>
</feature>
<feature type="glycosylation site" description="N-linked (GlcNAc...) asparagine" evidence="4">
    <location>
        <position position="9"/>
    </location>
</feature>
<feature type="disulfide bond">
    <location>
        <begin position="96"/>
        <end position="176"/>
    </location>
</feature>
<feature type="disulfide bond">
    <location>
        <begin position="413"/>
        <end position="416"/>
    </location>
</feature>
<feature type="mutagenesis site" description="Nearly abolishes signaling via downstream effectors." evidence="11">
    <original>N</original>
    <variation>A</variation>
    <location>
        <position position="58"/>
    </location>
</feature>
<feature type="mutagenesis site" description="Reduced affinity for acetylcholine. Abolishes signaling via downstream effectors." evidence="11">
    <original>D</original>
    <variation>E</variation>
    <location>
        <position position="103"/>
    </location>
</feature>
<feature type="mutagenesis site" description="Abolishes signaling via downstream effectors." evidence="11">
    <original>Y</original>
    <variation>F</variation>
    <location>
        <position position="206"/>
    </location>
</feature>
<feature type="mutagenesis site" description="Reduced affinity for acetylcholine. Reduces signaling via downstream effectors." evidence="11">
    <original>N</original>
    <variation>Q</variation>
    <location>
        <position position="404"/>
    </location>
</feature>
<feature type="helix" evidence="17">
    <location>
        <begin position="17"/>
        <end position="50"/>
    </location>
</feature>
<feature type="helix" evidence="17">
    <location>
        <begin position="52"/>
        <end position="54"/>
    </location>
</feature>
<feature type="helix" evidence="17">
    <location>
        <begin position="57"/>
        <end position="74"/>
    </location>
</feature>
<feature type="helix" evidence="17">
    <location>
        <begin position="76"/>
        <end position="86"/>
    </location>
</feature>
<feature type="helix" evidence="17">
    <location>
        <begin position="93"/>
        <end position="126"/>
    </location>
</feature>
<feature type="turn" evidence="17">
    <location>
        <begin position="128"/>
        <end position="131"/>
    </location>
</feature>
<feature type="helix" evidence="17">
    <location>
        <begin position="132"/>
        <end position="134"/>
    </location>
</feature>
<feature type="helix" evidence="17">
    <location>
        <begin position="137"/>
        <end position="166"/>
    </location>
</feature>
<feature type="helix" evidence="17">
    <location>
        <begin position="179"/>
        <end position="182"/>
    </location>
</feature>
<feature type="helix" evidence="17">
    <location>
        <begin position="184"/>
        <end position="194"/>
    </location>
</feature>
<feature type="helix" evidence="17">
    <location>
        <begin position="196"/>
        <end position="213"/>
    </location>
</feature>
<feature type="strand" evidence="18">
    <location>
        <begin position="308"/>
        <end position="310"/>
    </location>
</feature>
<feature type="helix" evidence="17">
    <location>
        <begin position="382"/>
        <end position="410"/>
    </location>
</feature>
<feature type="helix" evidence="16">
    <location>
        <begin position="414"/>
        <end position="416"/>
    </location>
</feature>
<feature type="helix" evidence="17">
    <location>
        <begin position="419"/>
        <end position="440"/>
    </location>
</feature>
<feature type="helix" evidence="17">
    <location>
        <begin position="441"/>
        <end position="443"/>
    </location>
</feature>
<feature type="helix" evidence="17">
    <location>
        <begin position="445"/>
        <end position="455"/>
    </location>
</feature>
<name>ACM2_HUMAN</name>
<gene>
    <name type="primary">CHRM2</name>
</gene>
<sequence length="466" mass="51715">MNNSTNSSNNSLALTSPYKTFEVVFIVLVAGSLSLVTIIGNILVMVSIKVNRHLQTVNNYFLFSLACADLIIGVFSMNLYTLYTVIGYWPLGPVVCDLWLALDYVVSNASVMNLLIISFDRYFCVTKPLTYPVKRTTKMAGMMIAAAWVLSFILWAPAILFWQFIVGVRTVEDGECYIQFFSNAAVTFGTAIAAFYLPVIIMTVLYWHISRASKSRIKKDKKEPVANQDPVSPSLVQGRIVKPNNNNMPSSDDGLEHNKIQNGKAPRDPVTENCVQGEEKESSNDSTSVSAVASNMRDDEITQDENTVSTSLGHSKDENSKQTCIRIGTKTPKSDSCTPTNTTVEVVGSSGQNGDEKQNIVARKIVKMTKQPAKKKPPPSREKKVTRTILAILLAFIITWAPYNVMVLINTFCAPCIPNTVWTIGYWLCYINSTINPACYALCNATFKKTFKHLLMCHYKNIGATR</sequence>
<keyword id="KW-0002">3D-structure</keyword>
<keyword id="KW-1003">Cell membrane</keyword>
<keyword id="KW-1015">Disulfide bond</keyword>
<keyword id="KW-0297">G-protein coupled receptor</keyword>
<keyword id="KW-0325">Glycoprotein</keyword>
<keyword id="KW-0472">Membrane</keyword>
<keyword id="KW-0597">Phosphoprotein</keyword>
<keyword id="KW-0628">Postsynaptic cell membrane</keyword>
<keyword id="KW-1267">Proteomics identification</keyword>
<keyword id="KW-0675">Receptor</keyword>
<keyword id="KW-1185">Reference proteome</keyword>
<keyword id="KW-0770">Synapse</keyword>
<keyword id="KW-0807">Transducer</keyword>
<keyword id="KW-0812">Transmembrane</keyword>
<keyword id="KW-1133">Transmembrane helix</keyword>
<protein>
    <recommendedName>
        <fullName>Muscarinic acetylcholine receptor M2</fullName>
    </recommendedName>
</protein>
<accession>P08172</accession>
<accession>Q4VBK6</accession>
<accession>Q9P1X9</accession>
<evidence type="ECO:0000250" key="1"/>
<evidence type="ECO:0000250" key="2">
    <source>
        <dbReference type="UniProtKB" id="P06199"/>
    </source>
</evidence>
<evidence type="ECO:0000250" key="3">
    <source>
        <dbReference type="UniProtKB" id="Q9ERZ4"/>
    </source>
</evidence>
<evidence type="ECO:0000255" key="4"/>
<evidence type="ECO:0000255" key="5">
    <source>
        <dbReference type="PROSITE-ProRule" id="PRU00521"/>
    </source>
</evidence>
<evidence type="ECO:0000256" key="6">
    <source>
        <dbReference type="SAM" id="MobiDB-lite"/>
    </source>
</evidence>
<evidence type="ECO:0000269" key="7">
    <source>
    </source>
</evidence>
<evidence type="ECO:0000269" key="8">
    <source>
    </source>
</evidence>
<evidence type="ECO:0000269" key="9">
    <source>
    </source>
</evidence>
<evidence type="ECO:0000269" key="10">
    <source>
    </source>
</evidence>
<evidence type="ECO:0000269" key="11">
    <source>
    </source>
</evidence>
<evidence type="ECO:0000269" key="12">
    <source>
    </source>
</evidence>
<evidence type="ECO:0000269" key="13">
    <source>
    </source>
</evidence>
<evidence type="ECO:0000305" key="14"/>
<evidence type="ECO:0000305" key="15">
    <source>
    </source>
</evidence>
<evidence type="ECO:0007829" key="16">
    <source>
        <dbReference type="PDB" id="5YC8"/>
    </source>
</evidence>
<evidence type="ECO:0007829" key="17">
    <source>
        <dbReference type="PDB" id="5ZKC"/>
    </source>
</evidence>
<evidence type="ECO:0007829" key="18">
    <source>
        <dbReference type="PDB" id="8J8R"/>
    </source>
</evidence>